<reference key="1">
    <citation type="journal article" date="2008" name="Environ. Microbiol.">
        <title>The genome of Erwinia tasmaniensis strain Et1/99, a non-pathogenic bacterium in the genus Erwinia.</title>
        <authorList>
            <person name="Kube M."/>
            <person name="Migdoll A.M."/>
            <person name="Mueller I."/>
            <person name="Kuhl H."/>
            <person name="Beck A."/>
            <person name="Reinhardt R."/>
            <person name="Geider K."/>
        </authorList>
    </citation>
    <scope>NUCLEOTIDE SEQUENCE [LARGE SCALE GENOMIC DNA]</scope>
    <source>
        <strain>DSM 17950 / CFBP 7177 / CIP 109463 / NCPPB 4357 / Et1/99</strain>
    </source>
</reference>
<comment type="function">
    <text evidence="1">Catalyzes the NADPH-dependent reduction of glutamyl-tRNA(Glu) to glutamate 1-semialdehyde (GSA).</text>
</comment>
<comment type="catalytic activity">
    <reaction evidence="1">
        <text>(S)-4-amino-5-oxopentanoate + tRNA(Glu) + NADP(+) = L-glutamyl-tRNA(Glu) + NADPH + H(+)</text>
        <dbReference type="Rhea" id="RHEA:12344"/>
        <dbReference type="Rhea" id="RHEA-COMP:9663"/>
        <dbReference type="Rhea" id="RHEA-COMP:9680"/>
        <dbReference type="ChEBI" id="CHEBI:15378"/>
        <dbReference type="ChEBI" id="CHEBI:57501"/>
        <dbReference type="ChEBI" id="CHEBI:57783"/>
        <dbReference type="ChEBI" id="CHEBI:58349"/>
        <dbReference type="ChEBI" id="CHEBI:78442"/>
        <dbReference type="ChEBI" id="CHEBI:78520"/>
        <dbReference type="EC" id="1.2.1.70"/>
    </reaction>
</comment>
<comment type="pathway">
    <text evidence="1">Porphyrin-containing compound metabolism; protoporphyrin-IX biosynthesis; 5-aminolevulinate from L-glutamyl-tRNA(Glu): step 1/2.</text>
</comment>
<comment type="subunit">
    <text evidence="1">Homodimer.</text>
</comment>
<comment type="domain">
    <text evidence="1">Possesses an unusual extended V-shaped dimeric structure with each monomer consisting of three distinct domains arranged along a curved 'spinal' alpha-helix. The N-terminal catalytic domain specifically recognizes the glutamate moiety of the substrate. The second domain is the NADPH-binding domain, and the third C-terminal domain is responsible for dimerization.</text>
</comment>
<comment type="miscellaneous">
    <text evidence="1">During catalysis, the active site Cys acts as a nucleophile attacking the alpha-carbonyl group of tRNA-bound glutamate with the formation of a thioester intermediate between enzyme and glutamate, and the concomitant release of tRNA(Glu). The thioester intermediate is finally reduced by direct hydride transfer from NADPH, to form the product GSA.</text>
</comment>
<comment type="similarity">
    <text evidence="1">Belongs to the glutamyl-tRNA reductase family.</text>
</comment>
<feature type="chain" id="PRO_1000093135" description="Glutamyl-tRNA reductase">
    <location>
        <begin position="1"/>
        <end position="418"/>
    </location>
</feature>
<feature type="active site" description="Nucleophile" evidence="1">
    <location>
        <position position="50"/>
    </location>
</feature>
<feature type="binding site" evidence="1">
    <location>
        <begin position="49"/>
        <end position="52"/>
    </location>
    <ligand>
        <name>substrate</name>
    </ligand>
</feature>
<feature type="binding site" evidence="1">
    <location>
        <position position="109"/>
    </location>
    <ligand>
        <name>substrate</name>
    </ligand>
</feature>
<feature type="binding site" evidence="1">
    <location>
        <begin position="114"/>
        <end position="116"/>
    </location>
    <ligand>
        <name>substrate</name>
    </ligand>
</feature>
<feature type="binding site" evidence="1">
    <location>
        <position position="120"/>
    </location>
    <ligand>
        <name>substrate</name>
    </ligand>
</feature>
<feature type="binding site" evidence="1">
    <location>
        <begin position="189"/>
        <end position="194"/>
    </location>
    <ligand>
        <name>NADP(+)</name>
        <dbReference type="ChEBI" id="CHEBI:58349"/>
    </ligand>
</feature>
<feature type="site" description="Important for activity" evidence="1">
    <location>
        <position position="99"/>
    </location>
</feature>
<protein>
    <recommendedName>
        <fullName evidence="1">Glutamyl-tRNA reductase</fullName>
        <shortName evidence="1">GluTR</shortName>
        <ecNumber evidence="1">1.2.1.70</ecNumber>
    </recommendedName>
</protein>
<accession>B2VEH8</accession>
<keyword id="KW-0521">NADP</keyword>
<keyword id="KW-0560">Oxidoreductase</keyword>
<keyword id="KW-0627">Porphyrin biosynthesis</keyword>
<keyword id="KW-1185">Reference proteome</keyword>
<sequence length="418" mass="46078">MTLLALGINHKTAPVALRERVTFTPDTLEQALNSLMAQPLIQGGVVLSTCNRTELYLSVEQQENLQDQLIAWLCDYHQLSPDEVLKSLYWHHGNEAVSHLMRVASGLDSLVLGEPQILGQVKKAFADSQRGHSLSGELERMFQKSFSVAKRVRTETEIGASAVSVAFAACTLARQIFESLTTVNVLLVGAGETIELAARHLHQHKVKKLMIANRTRERAQVLAAEVEAEVISLADIDERLAEADIIISSTASPLPIIGKGMVERALKKRRNQPMLLVDIAVPRDVEPDVGKLPNAYLYSVDDLQAIIESNMAQRQAAAVEAETIVVQESSDFMSWLRAQSAVETIREYRAQADEARAELEARAIQSLQQGADAEKVLRDLAHKLTNRLIHAPTKSLQQAARDGDGERLQILRDGLGLE</sequence>
<dbReference type="EC" id="1.2.1.70" evidence="1"/>
<dbReference type="EMBL" id="CU468135">
    <property type="protein sequence ID" value="CAO96926.1"/>
    <property type="molecule type" value="Genomic_DNA"/>
</dbReference>
<dbReference type="RefSeq" id="WP_012441610.1">
    <property type="nucleotide sequence ID" value="NC_010694.1"/>
</dbReference>
<dbReference type="SMR" id="B2VEH8"/>
<dbReference type="STRING" id="465817.ETA_18800"/>
<dbReference type="KEGG" id="eta:ETA_18800"/>
<dbReference type="eggNOG" id="COG0373">
    <property type="taxonomic scope" value="Bacteria"/>
</dbReference>
<dbReference type="HOGENOM" id="CLU_035113_2_2_6"/>
<dbReference type="OrthoDB" id="110209at2"/>
<dbReference type="UniPathway" id="UPA00251">
    <property type="reaction ID" value="UER00316"/>
</dbReference>
<dbReference type="Proteomes" id="UP000001726">
    <property type="component" value="Chromosome"/>
</dbReference>
<dbReference type="GO" id="GO:0008883">
    <property type="term" value="F:glutamyl-tRNA reductase activity"/>
    <property type="evidence" value="ECO:0007669"/>
    <property type="project" value="UniProtKB-UniRule"/>
</dbReference>
<dbReference type="GO" id="GO:0050661">
    <property type="term" value="F:NADP binding"/>
    <property type="evidence" value="ECO:0007669"/>
    <property type="project" value="InterPro"/>
</dbReference>
<dbReference type="GO" id="GO:0019353">
    <property type="term" value="P:protoporphyrinogen IX biosynthetic process from glutamate"/>
    <property type="evidence" value="ECO:0007669"/>
    <property type="project" value="TreeGrafter"/>
</dbReference>
<dbReference type="CDD" id="cd05213">
    <property type="entry name" value="NAD_bind_Glutamyl_tRNA_reduct"/>
    <property type="match status" value="1"/>
</dbReference>
<dbReference type="FunFam" id="3.30.460.30:FF:000001">
    <property type="entry name" value="Glutamyl-tRNA reductase"/>
    <property type="match status" value="1"/>
</dbReference>
<dbReference type="FunFam" id="3.40.50.720:FF:000031">
    <property type="entry name" value="Glutamyl-tRNA reductase"/>
    <property type="match status" value="1"/>
</dbReference>
<dbReference type="Gene3D" id="3.30.460.30">
    <property type="entry name" value="Glutamyl-tRNA reductase, N-terminal domain"/>
    <property type="match status" value="1"/>
</dbReference>
<dbReference type="Gene3D" id="3.40.50.720">
    <property type="entry name" value="NAD(P)-binding Rossmann-like Domain"/>
    <property type="match status" value="1"/>
</dbReference>
<dbReference type="HAMAP" id="MF_00087">
    <property type="entry name" value="Glu_tRNA_reductase"/>
    <property type="match status" value="1"/>
</dbReference>
<dbReference type="InterPro" id="IPR000343">
    <property type="entry name" value="4pyrrol_synth_GluRdtase"/>
</dbReference>
<dbReference type="InterPro" id="IPR015896">
    <property type="entry name" value="4pyrrol_synth_GluRdtase_dimer"/>
</dbReference>
<dbReference type="InterPro" id="IPR015895">
    <property type="entry name" value="4pyrrol_synth_GluRdtase_N"/>
</dbReference>
<dbReference type="InterPro" id="IPR018214">
    <property type="entry name" value="GluRdtase_CS"/>
</dbReference>
<dbReference type="InterPro" id="IPR036453">
    <property type="entry name" value="GluRdtase_dimer_dom_sf"/>
</dbReference>
<dbReference type="InterPro" id="IPR036343">
    <property type="entry name" value="GluRdtase_N_sf"/>
</dbReference>
<dbReference type="InterPro" id="IPR036291">
    <property type="entry name" value="NAD(P)-bd_dom_sf"/>
</dbReference>
<dbReference type="InterPro" id="IPR006151">
    <property type="entry name" value="Shikm_DH/Glu-tRNA_Rdtase"/>
</dbReference>
<dbReference type="NCBIfam" id="TIGR01035">
    <property type="entry name" value="hemA"/>
    <property type="match status" value="1"/>
</dbReference>
<dbReference type="PANTHER" id="PTHR43013">
    <property type="entry name" value="GLUTAMYL-TRNA REDUCTASE"/>
    <property type="match status" value="1"/>
</dbReference>
<dbReference type="PANTHER" id="PTHR43013:SF1">
    <property type="entry name" value="GLUTAMYL-TRNA REDUCTASE"/>
    <property type="match status" value="1"/>
</dbReference>
<dbReference type="Pfam" id="PF00745">
    <property type="entry name" value="GlutR_dimer"/>
    <property type="match status" value="1"/>
</dbReference>
<dbReference type="Pfam" id="PF05201">
    <property type="entry name" value="GlutR_N"/>
    <property type="match status" value="1"/>
</dbReference>
<dbReference type="Pfam" id="PF01488">
    <property type="entry name" value="Shikimate_DH"/>
    <property type="match status" value="1"/>
</dbReference>
<dbReference type="PIRSF" id="PIRSF000445">
    <property type="entry name" value="4pyrrol_synth_GluRdtase"/>
    <property type="match status" value="1"/>
</dbReference>
<dbReference type="SUPFAM" id="SSF69742">
    <property type="entry name" value="Glutamyl tRNA-reductase catalytic, N-terminal domain"/>
    <property type="match status" value="1"/>
</dbReference>
<dbReference type="SUPFAM" id="SSF69075">
    <property type="entry name" value="Glutamyl tRNA-reductase dimerization domain"/>
    <property type="match status" value="1"/>
</dbReference>
<dbReference type="SUPFAM" id="SSF51735">
    <property type="entry name" value="NAD(P)-binding Rossmann-fold domains"/>
    <property type="match status" value="1"/>
</dbReference>
<dbReference type="PROSITE" id="PS00747">
    <property type="entry name" value="GLUTR"/>
    <property type="match status" value="1"/>
</dbReference>
<evidence type="ECO:0000255" key="1">
    <source>
        <dbReference type="HAMAP-Rule" id="MF_00087"/>
    </source>
</evidence>
<proteinExistence type="inferred from homology"/>
<gene>
    <name evidence="1" type="primary">hemA</name>
    <name type="ordered locus">ETA_18800</name>
</gene>
<name>HEM1_ERWT9</name>
<organism>
    <name type="scientific">Erwinia tasmaniensis (strain DSM 17950 / CFBP 7177 / CIP 109463 / NCPPB 4357 / Et1/99)</name>
    <dbReference type="NCBI Taxonomy" id="465817"/>
    <lineage>
        <taxon>Bacteria</taxon>
        <taxon>Pseudomonadati</taxon>
        <taxon>Pseudomonadota</taxon>
        <taxon>Gammaproteobacteria</taxon>
        <taxon>Enterobacterales</taxon>
        <taxon>Erwiniaceae</taxon>
        <taxon>Erwinia</taxon>
    </lineage>
</organism>